<name>BPHC_PSES1</name>
<accession>P17297</accession>
<accession>Q52441</accession>
<protein>
    <recommendedName>
        <fullName>Biphenyl-2,3-diol 1,2-dioxygenase</fullName>
        <ecNumber>1.13.11.39</ecNumber>
    </recommendedName>
    <alternativeName>
        <fullName>2,3-dihydroxybiphenyl dioxygenase</fullName>
        <shortName>DHBD</shortName>
    </alternativeName>
    <alternativeName>
        <fullName>23OHBP oxygenase</fullName>
    </alternativeName>
</protein>
<proteinExistence type="evidence at protein level"/>
<reference key="1">
    <citation type="journal article" date="1989" name="J. Bacteriol.">
        <title>Cloning and sequencing of two tandem genes involved in degradation of 2,3-dihydroxybiphenyl to benzoic acid in the polychlorinated biphenyl-degrading soil bacterium Pseudomonas sp. strain KKS102.</title>
        <authorList>
            <person name="Kimbara K."/>
            <person name="Hashimoto T."/>
            <person name="Fukuda M."/>
            <person name="Koana T."/>
            <person name="Takagi M."/>
            <person name="Oishi M."/>
            <person name="Yano K."/>
        </authorList>
    </citation>
    <scope>NUCLEOTIDE SEQUENCE [GENOMIC DNA]</scope>
</reference>
<reference key="2">
    <citation type="journal article" date="1994" name="Biochem. Biophys. Res. Commun.">
        <title>Identification of the bphA and bphB genes of Pseudomonas sp. strains KKS102 involved in degradation of biphenyl and polychlorinated biphenyls.</title>
        <authorList>
            <person name="Fukuda M."/>
            <person name="Yasukochi Y."/>
            <person name="Kikuchi Y."/>
            <person name="Nagata Y."/>
            <person name="Kimbara K."/>
            <person name="Horiuchi H."/>
            <person name="Takagi M."/>
            <person name="Yano K."/>
        </authorList>
    </citation>
    <scope>NUCLEOTIDE SEQUENCE [GENOMIC DNA] OF 1-16</scope>
</reference>
<reference key="3">
    <citation type="journal article" date="1996" name="J. Mol. Biol.">
        <title>Three-dimensional structures of free form and two substrate complexes of an extradiol ring-cleavage type dioxygenase, the BphC enzyme from Pseudomonas sp. strain KKS102.</title>
        <authorList>
            <person name="Senda T."/>
            <person name="Sugiyama K."/>
            <person name="Narita H."/>
            <person name="Yamamoto T."/>
            <person name="Kimbara K."/>
            <person name="Fukuda M."/>
            <person name="Sato M."/>
            <person name="Yano K."/>
            <person name="Mitsui Y."/>
        </authorList>
    </citation>
    <scope>X-RAY CRYSTALLOGRAPHY (1.8 ANGSTROMS)</scope>
</reference>
<reference key="4">
    <citation type="journal article" date="2001" name="J. Inorg. Biochem.">
        <title>Crystal structures of substrate free and complex forms of reactivated BphC, an extradiol type ring-cleavage dioxygenase.</title>
        <authorList>
            <person name="Uragami Y."/>
            <person name="Senda T."/>
            <person name="Sugimoto K."/>
            <person name="Sato N."/>
            <person name="Nagarajan V."/>
            <person name="Masai E."/>
            <person name="Fukuda M."/>
            <person name="Mitsui Y."/>
        </authorList>
    </citation>
    <scope>X-RAY CRYSTALLOGRAPHY (2.0 ANGSTROMS)</scope>
</reference>
<reference key="5">
    <citation type="journal article" date="2002" name="J. Mol. Biol.">
        <title>Crystal structures of the reaction intermediate and its homologue of an extradiol-cleaving catecholic dioxygenase.</title>
        <authorList>
            <person name="Sato N."/>
            <person name="Uragami Y."/>
            <person name="Nishizaki T."/>
            <person name="Takahashi Y."/>
            <person name="Sazaki G."/>
            <person name="Sugimoto K."/>
            <person name="Nonaka T."/>
            <person name="Masai E."/>
            <person name="Fukuda M."/>
            <person name="Senda T."/>
        </authorList>
    </citation>
    <scope>X-RAY CRYSTALLOGRAPHY (1.45 ANGSTROMS) OF NATIVE ENZYME; SUBSTRATE COMPLEXES AND H145A MUTANT</scope>
</reference>
<feature type="initiator methionine" description="Removed">
    <location>
        <position position="1"/>
    </location>
</feature>
<feature type="chain" id="PRO_0000085035" description="Biphenyl-2,3-diol 1,2-dioxygenase">
    <location>
        <begin position="2"/>
        <end position="293"/>
    </location>
</feature>
<feature type="domain" description="VOC 1" evidence="1">
    <location>
        <begin position="5"/>
        <end position="119"/>
    </location>
</feature>
<feature type="domain" description="VOC 2" evidence="1">
    <location>
        <begin position="143"/>
        <end position="265"/>
    </location>
</feature>
<feature type="binding site">
    <location>
        <position position="146"/>
    </location>
    <ligand>
        <name>Fe cation</name>
        <dbReference type="ChEBI" id="CHEBI:24875"/>
    </ligand>
</feature>
<feature type="binding site">
    <location>
        <position position="210"/>
    </location>
    <ligand>
        <name>Fe cation</name>
        <dbReference type="ChEBI" id="CHEBI:24875"/>
    </ligand>
</feature>
<feature type="binding site">
    <location>
        <position position="261"/>
    </location>
    <ligand>
        <name>Fe cation</name>
        <dbReference type="ChEBI" id="CHEBI:24875"/>
    </ligand>
</feature>
<feature type="strand" evidence="5">
    <location>
        <begin position="5"/>
        <end position="14"/>
    </location>
</feature>
<feature type="helix" evidence="5">
    <location>
        <begin position="16"/>
        <end position="25"/>
    </location>
</feature>
<feature type="strand" evidence="5">
    <location>
        <begin position="30"/>
        <end position="35"/>
    </location>
</feature>
<feature type="strand" evidence="5">
    <location>
        <begin position="38"/>
        <end position="47"/>
    </location>
</feature>
<feature type="strand" evidence="5">
    <location>
        <begin position="49"/>
        <end position="54"/>
    </location>
</feature>
<feature type="strand" evidence="5">
    <location>
        <begin position="59"/>
        <end position="66"/>
    </location>
</feature>
<feature type="helix" evidence="5">
    <location>
        <begin position="70"/>
        <end position="83"/>
    </location>
</feature>
<feature type="strand" evidence="4">
    <location>
        <begin position="87"/>
        <end position="89"/>
    </location>
</feature>
<feature type="helix" evidence="5">
    <location>
        <begin position="92"/>
        <end position="98"/>
    </location>
</feature>
<feature type="strand" evidence="5">
    <location>
        <begin position="101"/>
        <end position="107"/>
    </location>
</feature>
<feature type="helix" evidence="3">
    <location>
        <begin position="109"/>
        <end position="111"/>
    </location>
</feature>
<feature type="strand" evidence="5">
    <location>
        <begin position="113"/>
        <end position="118"/>
    </location>
</feature>
<feature type="strand" evidence="5">
    <location>
        <begin position="131"/>
        <end position="133"/>
    </location>
</feature>
<feature type="helix" evidence="5">
    <location>
        <begin position="140"/>
        <end position="142"/>
    </location>
</feature>
<feature type="strand" evidence="5">
    <location>
        <begin position="146"/>
        <end position="150"/>
    </location>
</feature>
<feature type="helix" evidence="5">
    <location>
        <begin position="154"/>
        <end position="163"/>
    </location>
</feature>
<feature type="strand" evidence="5">
    <location>
        <begin position="168"/>
        <end position="178"/>
    </location>
</feature>
<feature type="strand" evidence="5">
    <location>
        <begin position="181"/>
        <end position="194"/>
    </location>
</feature>
<feature type="strand" evidence="5">
    <location>
        <begin position="196"/>
        <end position="200"/>
    </location>
</feature>
<feature type="strand" evidence="5">
    <location>
        <begin position="205"/>
        <end position="217"/>
    </location>
</feature>
<feature type="helix" evidence="5">
    <location>
        <begin position="218"/>
        <end position="230"/>
    </location>
</feature>
<feature type="strand" evidence="5">
    <location>
        <begin position="238"/>
        <end position="244"/>
    </location>
</feature>
<feature type="strand" evidence="5">
    <location>
        <begin position="247"/>
        <end position="252"/>
    </location>
</feature>
<feature type="strand" evidence="5">
    <location>
        <begin position="259"/>
        <end position="264"/>
    </location>
</feature>
<feature type="strand" evidence="5">
    <location>
        <begin position="277"/>
        <end position="279"/>
    </location>
</feature>
<feature type="strand" evidence="5">
    <location>
        <begin position="281"/>
        <end position="285"/>
    </location>
</feature>
<evidence type="ECO:0000255" key="1">
    <source>
        <dbReference type="PROSITE-ProRule" id="PRU01163"/>
    </source>
</evidence>
<evidence type="ECO:0000305" key="2"/>
<evidence type="ECO:0007829" key="3">
    <source>
        <dbReference type="PDB" id="1DHY"/>
    </source>
</evidence>
<evidence type="ECO:0007829" key="4">
    <source>
        <dbReference type="PDB" id="1EIR"/>
    </source>
</evidence>
<evidence type="ECO:0007829" key="5">
    <source>
        <dbReference type="PDB" id="1KW3"/>
    </source>
</evidence>
<comment type="catalytic activity">
    <reaction>
        <text>biphenyl-2,3-diol + O2 = 2-hydroxy-6-oxo-6-phenylhexa-2,4-dienoate + H(+)</text>
        <dbReference type="Rhea" id="RHEA:14413"/>
        <dbReference type="ChEBI" id="CHEBI:15378"/>
        <dbReference type="ChEBI" id="CHEBI:15379"/>
        <dbReference type="ChEBI" id="CHEBI:16205"/>
        <dbReference type="ChEBI" id="CHEBI:58284"/>
        <dbReference type="EC" id="1.13.11.39"/>
    </reaction>
</comment>
<comment type="cofactor">
    <cofactor>
        <name>Fe(2+)</name>
        <dbReference type="ChEBI" id="CHEBI:29033"/>
    </cofactor>
</comment>
<comment type="pathway">
    <text>Xenobiotic degradation; biphenyl degradation; 2-hydroxy-2,4-pentadienoate and benzoate from biphenyl: step 3/4.</text>
</comment>
<comment type="subunit">
    <text>Homooctamer.</text>
</comment>
<comment type="similarity">
    <text evidence="2">Belongs to the extradiol ring-cleavage dioxygenase family.</text>
</comment>
<sequence>MSIERLGYLGFAVKDVPAWDHFLTKSVGLMAAGSAGDAALYRADQRAWRIAVQPGELDDLAYAGLEVDDAAALERMADKLRQAGVAFTRGDEALMQQRKVMGLLCLQDPFGLPLEIYYGPAEIFHEPFLPSAPVSGFVTGDQGIGHFVRCVPDTAKAMAFYTEVLGFVLSDIIDIQMGPETSVPAHFLHCNGRHHTIALAAFPIPKRIHHFMLQANTIDDVGYAFDRLDAAGRITSLLGRHTNDQTLSFYADTPSPMIEVEFGWGPRTVDSSWTVARHSRTAMWGHKSVRGQR</sequence>
<gene>
    <name type="primary">bphC</name>
</gene>
<dbReference type="EC" id="1.13.11.39"/>
<dbReference type="EMBL" id="M26433">
    <property type="protein sequence ID" value="AAA25750.1"/>
    <property type="molecule type" value="Genomic_DNA"/>
</dbReference>
<dbReference type="EMBL" id="D17319">
    <property type="protein sequence ID" value="BAA04141.1"/>
    <property type="molecule type" value="Genomic_DNA"/>
</dbReference>
<dbReference type="PIR" id="A32312">
    <property type="entry name" value="DAPSPC"/>
</dbReference>
<dbReference type="PDB" id="1DHY">
    <property type="method" value="X-ray"/>
    <property type="resolution" value="2.30 A"/>
    <property type="chains" value="A=2-293"/>
</dbReference>
<dbReference type="PDB" id="1EIL">
    <property type="method" value="X-ray"/>
    <property type="resolution" value="2.00 A"/>
    <property type="chains" value="A=2-293"/>
</dbReference>
<dbReference type="PDB" id="1EIQ">
    <property type="method" value="X-ray"/>
    <property type="resolution" value="2.00 A"/>
    <property type="chains" value="A=2-293"/>
</dbReference>
<dbReference type="PDB" id="1EIR">
    <property type="method" value="X-ray"/>
    <property type="resolution" value="2.00 A"/>
    <property type="chains" value="A=2-293"/>
</dbReference>
<dbReference type="PDB" id="1KW3">
    <property type="method" value="X-ray"/>
    <property type="resolution" value="1.45 A"/>
    <property type="chains" value="B=2-293"/>
</dbReference>
<dbReference type="PDB" id="1KW6">
    <property type="method" value="X-ray"/>
    <property type="resolution" value="1.45 A"/>
    <property type="chains" value="B=2-293"/>
</dbReference>
<dbReference type="PDB" id="1KW8">
    <property type="method" value="X-ray"/>
    <property type="resolution" value="2.00 A"/>
    <property type="chains" value="B=2-293"/>
</dbReference>
<dbReference type="PDB" id="1KW9">
    <property type="method" value="X-ray"/>
    <property type="resolution" value="1.95 A"/>
    <property type="chains" value="B=2-293"/>
</dbReference>
<dbReference type="PDB" id="1KWB">
    <property type="method" value="X-ray"/>
    <property type="resolution" value="2.00 A"/>
    <property type="chains" value="B=2-293"/>
</dbReference>
<dbReference type="PDB" id="1KWC">
    <property type="method" value="X-ray"/>
    <property type="resolution" value="2.10 A"/>
    <property type="chains" value="B=2-293"/>
</dbReference>
<dbReference type="PDBsum" id="1DHY"/>
<dbReference type="PDBsum" id="1EIL"/>
<dbReference type="PDBsum" id="1EIQ"/>
<dbReference type="PDBsum" id="1EIR"/>
<dbReference type="PDBsum" id="1KW3"/>
<dbReference type="PDBsum" id="1KW6"/>
<dbReference type="PDBsum" id="1KW8"/>
<dbReference type="PDBsum" id="1KW9"/>
<dbReference type="PDBsum" id="1KWB"/>
<dbReference type="PDBsum" id="1KWC"/>
<dbReference type="SMR" id="P17297"/>
<dbReference type="DrugBank" id="DB02923">
    <property type="generic name" value="Biphenyl-2,3-Diol"/>
</dbReference>
<dbReference type="UniPathway" id="UPA00155">
    <property type="reaction ID" value="UER00252"/>
</dbReference>
<dbReference type="EvolutionaryTrace" id="P17297"/>
<dbReference type="GO" id="GO:0018583">
    <property type="term" value="F:biphenyl-2,3-diol 1,2-dioxygenase activity"/>
    <property type="evidence" value="ECO:0007669"/>
    <property type="project" value="UniProtKB-EC"/>
</dbReference>
<dbReference type="GO" id="GO:0008198">
    <property type="term" value="F:ferrous iron binding"/>
    <property type="evidence" value="ECO:0007669"/>
    <property type="project" value="InterPro"/>
</dbReference>
<dbReference type="GO" id="GO:0042178">
    <property type="term" value="P:xenobiotic catabolic process"/>
    <property type="evidence" value="ECO:0007669"/>
    <property type="project" value="InterPro"/>
</dbReference>
<dbReference type="CDD" id="cd07237">
    <property type="entry name" value="BphC1-RGP6_C_like"/>
    <property type="match status" value="1"/>
</dbReference>
<dbReference type="CDD" id="cd07252">
    <property type="entry name" value="BphC1-RGP6_N_like"/>
    <property type="match status" value="1"/>
</dbReference>
<dbReference type="Gene3D" id="3.10.180.10">
    <property type="entry name" value="2,3-Dihydroxybiphenyl 1,2-Dioxygenase, domain 1"/>
    <property type="match status" value="2"/>
</dbReference>
<dbReference type="InterPro" id="IPR017626">
    <property type="entry name" value="DiOHbiphenyl_dOase"/>
</dbReference>
<dbReference type="InterPro" id="IPR029068">
    <property type="entry name" value="Glyas_Bleomycin-R_OHBP_Dase"/>
</dbReference>
<dbReference type="InterPro" id="IPR004360">
    <property type="entry name" value="Glyas_Fos-R_dOase_dom"/>
</dbReference>
<dbReference type="InterPro" id="IPR037523">
    <property type="entry name" value="VOC"/>
</dbReference>
<dbReference type="InterPro" id="IPR000486">
    <property type="entry name" value="Xdiol_ring_cleave_dOase_1/2"/>
</dbReference>
<dbReference type="NCBIfam" id="TIGR03213">
    <property type="entry name" value="23dbph12diox"/>
    <property type="match status" value="1"/>
</dbReference>
<dbReference type="Pfam" id="PF22632">
    <property type="entry name" value="BphC_D1"/>
    <property type="match status" value="1"/>
</dbReference>
<dbReference type="Pfam" id="PF00903">
    <property type="entry name" value="Glyoxalase"/>
    <property type="match status" value="1"/>
</dbReference>
<dbReference type="SUPFAM" id="SSF54593">
    <property type="entry name" value="Glyoxalase/Bleomycin resistance protein/Dihydroxybiphenyl dioxygenase"/>
    <property type="match status" value="2"/>
</dbReference>
<dbReference type="PROSITE" id="PS00082">
    <property type="entry name" value="EXTRADIOL_DIOXYGENAS"/>
    <property type="match status" value="1"/>
</dbReference>
<dbReference type="PROSITE" id="PS51819">
    <property type="entry name" value="VOC"/>
    <property type="match status" value="2"/>
</dbReference>
<organism>
    <name type="scientific">Pseudomonas sp. (strain KKS102)</name>
    <dbReference type="NCBI Taxonomy" id="307"/>
    <lineage>
        <taxon>Bacteria</taxon>
        <taxon>Pseudomonadati</taxon>
        <taxon>Pseudomonadota</taxon>
    </lineage>
</organism>
<keyword id="KW-0002">3D-structure</keyword>
<keyword id="KW-0058">Aromatic hydrocarbons catabolism</keyword>
<keyword id="KW-0223">Dioxygenase</keyword>
<keyword id="KW-0408">Iron</keyword>
<keyword id="KW-0479">Metal-binding</keyword>
<keyword id="KW-0560">Oxidoreductase</keyword>
<keyword id="KW-0677">Repeat</keyword>